<sequence length="542" mass="60083">MSSSSSSPRETYEEDREYESQAKRLKTEEGEIDYSAEEGENRREATPRGGGDGGGGGRSFSQPEAGGSHHKVSVSPVVHVRGLCESVVEADLVEALEKFGTICYVMMMPFKRQALVEFENIDSAKECVTFAADEPVYIAGQQAFFNYSTSKRITRPGNTDDPSGGNKVLLLSIQNPLYPITVDVLYTVCNPVGKVQRIVIFKRNGIQAMVEFESVLCAQKAKAALNGADIYAGCCTLKIEYARPTRLNVIRNDNDSWDYTKPYLGRRDRGKGRQRQAILGEHPSSFRHDGYGSHGPLLPLPSRYRMGSRDTPELVAYPLPQASSSYMHGGNPSGSVVMVSGLHQLKMNCSRVFNLFCLYGNIEKVKFMKTIPGTALVEMGDEYAVERAVTHLNNVKLFGKRLNVCVSKQHSVVPSQIFELEDGTSSYKDFAMSKNNRFTSAGQASKNIIQPPSCVLHYYNVPLCVTEETFTKLCNDHEVLTFIKYKVFDAKPSAKTLSGLLEWECKTDAVEALTALNHYQIRVPNGSNPYTLKLCFSTSSHL</sequence>
<protein>
    <recommendedName>
        <fullName>Heterogeneous nuclear ribonucleoprotein L-like</fullName>
        <shortName>hnRNPLL</shortName>
    </recommendedName>
    <alternativeName>
        <fullName>Stromal RNA-regulating factor</fullName>
    </alternativeName>
</protein>
<comment type="function">
    <text evidence="4">RNA-binding protein that functions as a regulator of alternative splicing for multiple target mRNAs, including PTPRC/CD45 and STAT5A. Required for alternative splicing of PTPRC.</text>
</comment>
<comment type="subunit">
    <text evidence="4">Interacts with HNRNPL.</text>
</comment>
<comment type="interaction">
    <interactant intactId="EBI-535849">
        <id>Q8WVV9</id>
    </interactant>
    <interactant intactId="EBI-998198">
        <id>Q8N9W6</id>
        <label>BOLL</label>
    </interactant>
    <organismsDiffer>false</organismsDiffer>
    <experiments>4</experiments>
</comment>
<comment type="interaction">
    <interactant intactId="EBI-535849">
        <id>Q8WVV9</id>
    </interactant>
    <interactant intactId="EBI-7875264">
        <id>O75553</id>
        <label>DAB1</label>
    </interactant>
    <organismsDiffer>false</organismsDiffer>
    <experiments>3</experiments>
</comment>
<comment type="interaction">
    <interactant intactId="EBI-535849">
        <id>Q8WVV9</id>
    </interactant>
    <interactant intactId="EBI-304185">
        <id>P61978</id>
        <label>HNRNPK</label>
    </interactant>
    <organismsDiffer>false</organismsDiffer>
    <experiments>9</experiments>
</comment>
<comment type="interaction">
    <interactant intactId="EBI-535849">
        <id>Q8WVV9</id>
    </interactant>
    <interactant intactId="EBI-7060731">
        <id>P61978-2</id>
        <label>HNRNPK</label>
    </interactant>
    <organismsDiffer>false</organismsDiffer>
    <experiments>6</experiments>
</comment>
<comment type="interaction">
    <interactant intactId="EBI-535849">
        <id>Q8WVV9</id>
    </interactant>
    <interactant intactId="EBI-724076">
        <id>Q99750</id>
        <label>MDFI</label>
    </interactant>
    <organismsDiffer>false</organismsDiffer>
    <experiments>4</experiments>
</comment>
<comment type="interaction">
    <interactant intactId="EBI-535849">
        <id>Q8WVV9</id>
    </interactant>
    <interactant intactId="EBI-945792">
        <id>Q96PU8</id>
        <label>QKI</label>
    </interactant>
    <organismsDiffer>false</organismsDiffer>
    <experiments>4</experiments>
</comment>
<comment type="interaction">
    <interactant intactId="EBI-535849">
        <id>Q8WVV9</id>
    </interactant>
    <interactant intactId="EBI-740322">
        <id>Q93062</id>
        <label>RBPMS</label>
    </interactant>
    <organismsDiffer>false</organismsDiffer>
    <experiments>3</experiments>
</comment>
<comment type="interaction">
    <interactant intactId="EBI-535849">
        <id>Q8WVV9</id>
    </interactant>
    <interactant intactId="EBI-372094">
        <id>Q9BQY4</id>
        <label>RHOXF2</label>
    </interactant>
    <organismsDiffer>false</organismsDiffer>
    <experiments>3</experiments>
</comment>
<comment type="interaction">
    <interactant intactId="EBI-535849">
        <id>Q8WVV9</id>
    </interactant>
    <interactant intactId="EBI-741515">
        <id>Q9NVV9</id>
        <label>THAP1</label>
    </interactant>
    <organismsDiffer>false</organismsDiffer>
    <experiments>3</experiments>
</comment>
<comment type="interaction">
    <interactant intactId="EBI-535849">
        <id>Q8WVV9</id>
    </interactant>
    <interactant intactId="EBI-10180829">
        <id>Q7KZS0</id>
        <label>UBE2I</label>
    </interactant>
    <organismsDiffer>false</organismsDiffer>
    <experiments>3</experiments>
</comment>
<comment type="interaction">
    <interactant intactId="EBI-535849">
        <id>Q8WVV9</id>
    </interactant>
    <interactant intactId="EBI-25475859">
        <id>PRO_0000449620</id>
        <label>rep</label>
        <dbReference type="UniProtKB" id="P0DTD1"/>
    </interactant>
    <organismsDiffer>true</organismsDiffer>
    <experiments>2</experiments>
</comment>
<comment type="interaction">
    <interactant intactId="EBI-25845242">
        <id>Q8WVV9-3</id>
    </interactant>
    <interactant intactId="EBI-930964">
        <id>P54253</id>
        <label>ATXN1</label>
    </interactant>
    <organismsDiffer>false</organismsDiffer>
    <experiments>6</experiments>
</comment>
<comment type="interaction">
    <interactant intactId="EBI-25845242">
        <id>Q8WVV9-3</id>
    </interactant>
    <interactant intactId="EBI-10968534">
        <id>P50570-2</id>
        <label>DNM2</label>
    </interactant>
    <organismsDiffer>false</organismsDiffer>
    <experiments>3</experiments>
</comment>
<comment type="interaction">
    <interactant intactId="EBI-25845242">
        <id>Q8WVV9-3</id>
    </interactant>
    <interactant intactId="EBI-50433196">
        <id>A0A6Q8PF08</id>
        <label>PMP22</label>
    </interactant>
    <organismsDiffer>false</organismsDiffer>
    <experiments>3</experiments>
</comment>
<comment type="interaction">
    <interactant intactId="EBI-25845242">
        <id>Q8WVV9-3</id>
    </interactant>
    <interactant intactId="EBI-2010251">
        <id>P49810</id>
        <label>PSEN2</label>
    </interactant>
    <organismsDiffer>false</organismsDiffer>
    <experiments>3</experiments>
</comment>
<comment type="interaction">
    <interactant intactId="EBI-25845242">
        <id>Q8WVV9-3</id>
    </interactant>
    <interactant intactId="EBI-395421">
        <id>Q16637</id>
        <label>SMN2</label>
    </interactant>
    <organismsDiffer>false</organismsDiffer>
    <experiments>3</experiments>
</comment>
<comment type="interaction">
    <interactant intactId="EBI-25845242">
        <id>Q8WVV9-3</id>
    </interactant>
    <interactant intactId="EBI-985879">
        <id>P37840</id>
        <label>SNCA</label>
    </interactant>
    <organismsDiffer>false</organismsDiffer>
    <experiments>3</experiments>
</comment>
<comment type="interaction">
    <interactant intactId="EBI-25845242">
        <id>Q8WVV9-3</id>
    </interactant>
    <interactant intactId="EBI-990792">
        <id>P00441</id>
        <label>SOD1</label>
    </interactant>
    <organismsDiffer>false</organismsDiffer>
    <experiments>3</experiments>
</comment>
<comment type="interaction">
    <interactant intactId="EBI-25845242">
        <id>Q8WVV9-3</id>
    </interactant>
    <interactant intactId="EBI-714860">
        <id>P09936</id>
        <label>UCHL1</label>
    </interactant>
    <organismsDiffer>false</organismsDiffer>
    <experiments>3</experiments>
</comment>
<comment type="alternative products">
    <event type="alternative splicing"/>
    <isoform>
        <id>Q8WVV9-1</id>
        <name>1</name>
        <sequence type="displayed"/>
    </isoform>
    <isoform>
        <id>Q8WVV9-2</id>
        <name>2</name>
        <sequence type="described" ref="VSP_013286 VSP_013287"/>
    </isoform>
    <isoform>
        <id>Q8WVV9-3</id>
        <name>3</name>
        <sequence type="described" ref="VSP_013285 VSP_013288 VSP_013289"/>
    </isoform>
    <isoform>
        <id>Q8WVV9-4</id>
        <name>4</name>
        <sequence type="described" ref="VSP_013285"/>
    </isoform>
    <isoform>
        <id>Q8WVV9-5</id>
        <name>5</name>
        <sequence type="described" ref="VSP_054470"/>
    </isoform>
</comment>
<comment type="tissue specificity">
    <text evidence="3">Widely expressed. Detected in bone marrow stroma cells, skeletal muscle, heart, placenta, pancreas, kidney and lung.</text>
</comment>
<comment type="induction">
    <text evidence="4">Up-regulated in stimulated T-cells.</text>
</comment>
<feature type="chain" id="PRO_0000081609" description="Heterogeneous nuclear ribonucleoprotein L-like">
    <location>
        <begin position="1"/>
        <end position="542"/>
    </location>
</feature>
<feature type="domain" description="RRM 1" evidence="1">
    <location>
        <begin position="76"/>
        <end position="150"/>
    </location>
</feature>
<feature type="domain" description="RRM 2" evidence="1">
    <location>
        <begin position="166"/>
        <end position="244"/>
    </location>
</feature>
<feature type="domain" description="RRM 3" evidence="1">
    <location>
        <begin position="335"/>
        <end position="409"/>
    </location>
</feature>
<feature type="region of interest" description="Disordered" evidence="2">
    <location>
        <begin position="1"/>
        <end position="71"/>
    </location>
</feature>
<feature type="compositionally biased region" description="Basic and acidic residues" evidence="2">
    <location>
        <begin position="18"/>
        <end position="29"/>
    </location>
</feature>
<feature type="compositionally biased region" description="Gly residues" evidence="2">
    <location>
        <begin position="48"/>
        <end position="58"/>
    </location>
</feature>
<feature type="modified residue" description="Phosphoserine" evidence="11">
    <location>
        <position position="35"/>
    </location>
</feature>
<feature type="modified residue" description="Phosphothreonine" evidence="11">
    <location>
        <position position="46"/>
    </location>
</feature>
<feature type="modified residue" description="Phosphoserine" evidence="11">
    <location>
        <position position="59"/>
    </location>
</feature>
<feature type="modified residue" description="Phosphoserine" evidence="10">
    <location>
        <position position="68"/>
    </location>
</feature>
<feature type="modified residue" description="Phosphoserine" evidence="11">
    <location>
        <position position="75"/>
    </location>
</feature>
<feature type="cross-link" description="Glycyl lysine isopeptide (Lys-Gly) (interchain with G-Cter in SUMO2)" evidence="12">
    <location>
        <position position="26"/>
    </location>
</feature>
<feature type="cross-link" description="Glycyl lysine isopeptide (Lys-Gly) (interchain with G-Cter in SUMO2)" evidence="12">
    <location>
        <position position="491"/>
    </location>
</feature>
<feature type="splice variant" id="VSP_013285" description="In isoform 3 and isoform 4." evidence="5 6">
    <original>MSSSSSSP</original>
    <variation>MLA</variation>
    <location>
        <begin position="1"/>
        <end position="8"/>
    </location>
</feature>
<feature type="splice variant" id="VSP_054470" description="In isoform 5." evidence="9">
    <original>EFESVLCAQKAKAALNGADIYAGCCTLKIEYARPT</original>
    <variation>D</variation>
    <location>
        <begin position="211"/>
        <end position="245"/>
    </location>
</feature>
<feature type="splice variant" id="VSP_013286" description="In isoform 2." evidence="7 8">
    <original>DRGKGRQRQAILGEH</original>
    <variation>GCCWLMLKLLERSPL</variation>
    <location>
        <begin position="268"/>
        <end position="282"/>
    </location>
</feature>
<feature type="splice variant" id="VSP_013288" description="In isoform 3." evidence="6">
    <original>DRGKGRQRQAILG</original>
    <variation>GRYFIHFRMYLIC</variation>
    <location>
        <begin position="268"/>
        <end position="280"/>
    </location>
</feature>
<feature type="splice variant" id="VSP_013289" description="In isoform 3." evidence="6">
    <location>
        <begin position="281"/>
        <end position="542"/>
    </location>
</feature>
<feature type="splice variant" id="VSP_013287" description="In isoform 2." evidence="7 8">
    <location>
        <begin position="283"/>
        <end position="542"/>
    </location>
</feature>
<feature type="strand" evidence="13">
    <location>
        <begin position="167"/>
        <end position="175"/>
    </location>
</feature>
<feature type="helix" evidence="13">
    <location>
        <begin position="182"/>
        <end position="189"/>
    </location>
</feature>
<feature type="turn" evidence="13">
    <location>
        <begin position="190"/>
        <end position="192"/>
    </location>
</feature>
<feature type="strand" evidence="13">
    <location>
        <begin position="195"/>
        <end position="214"/>
    </location>
</feature>
<feature type="helix" evidence="13">
    <location>
        <begin position="215"/>
        <end position="225"/>
    </location>
</feature>
<feature type="strand" evidence="13">
    <location>
        <begin position="229"/>
        <end position="231"/>
    </location>
</feature>
<feature type="strand" evidence="13">
    <location>
        <begin position="234"/>
        <end position="241"/>
    </location>
</feature>
<feature type="strand" evidence="13">
    <location>
        <begin position="253"/>
        <end position="258"/>
    </location>
</feature>
<proteinExistence type="evidence at protein level"/>
<organism>
    <name type="scientific">Homo sapiens</name>
    <name type="common">Human</name>
    <dbReference type="NCBI Taxonomy" id="9606"/>
    <lineage>
        <taxon>Eukaryota</taxon>
        <taxon>Metazoa</taxon>
        <taxon>Chordata</taxon>
        <taxon>Craniata</taxon>
        <taxon>Vertebrata</taxon>
        <taxon>Euteleostomi</taxon>
        <taxon>Mammalia</taxon>
        <taxon>Eutheria</taxon>
        <taxon>Euarchontoglires</taxon>
        <taxon>Primates</taxon>
        <taxon>Haplorrhini</taxon>
        <taxon>Catarrhini</taxon>
        <taxon>Hominidae</taxon>
        <taxon>Homo</taxon>
    </lineage>
</organism>
<dbReference type="EMBL" id="AY236963">
    <property type="protein sequence ID" value="AAQ20084.2"/>
    <property type="molecule type" value="mRNA"/>
</dbReference>
<dbReference type="EMBL" id="AF461722">
    <property type="protein sequence ID" value="AAN76189.1"/>
    <property type="molecule type" value="Genomic_DNA"/>
</dbReference>
<dbReference type="EMBL" id="AF461712">
    <property type="protein sequence ID" value="AAN76189.1"/>
    <property type="status" value="JOINED"/>
    <property type="molecule type" value="Genomic_DNA"/>
</dbReference>
<dbReference type="EMBL" id="AF461713">
    <property type="protein sequence ID" value="AAN76189.1"/>
    <property type="status" value="JOINED"/>
    <property type="molecule type" value="Genomic_DNA"/>
</dbReference>
<dbReference type="EMBL" id="AF461715">
    <property type="protein sequence ID" value="AAN76189.1"/>
    <property type="status" value="JOINED"/>
    <property type="molecule type" value="Genomic_DNA"/>
</dbReference>
<dbReference type="EMBL" id="AF461717">
    <property type="protein sequence ID" value="AAN76189.1"/>
    <property type="status" value="JOINED"/>
    <property type="molecule type" value="Genomic_DNA"/>
</dbReference>
<dbReference type="EMBL" id="AF461719">
    <property type="protein sequence ID" value="AAN76189.1"/>
    <property type="status" value="JOINED"/>
    <property type="molecule type" value="Genomic_DNA"/>
</dbReference>
<dbReference type="EMBL" id="AF461721">
    <property type="protein sequence ID" value="AAN76189.1"/>
    <property type="status" value="JOINED"/>
    <property type="molecule type" value="Genomic_DNA"/>
</dbReference>
<dbReference type="EMBL" id="AF461720">
    <property type="protein sequence ID" value="AAN76189.1"/>
    <property type="status" value="JOINED"/>
    <property type="molecule type" value="Genomic_DNA"/>
</dbReference>
<dbReference type="EMBL" id="AF461718">
    <property type="protein sequence ID" value="AAN76189.1"/>
    <property type="status" value="JOINED"/>
    <property type="molecule type" value="Genomic_DNA"/>
</dbReference>
<dbReference type="EMBL" id="AF461716">
    <property type="protein sequence ID" value="AAN76189.1"/>
    <property type="status" value="JOINED"/>
    <property type="molecule type" value="Genomic_DNA"/>
</dbReference>
<dbReference type="EMBL" id="AF461714">
    <property type="protein sequence ID" value="AAN76189.1"/>
    <property type="status" value="JOINED"/>
    <property type="molecule type" value="Genomic_DNA"/>
</dbReference>
<dbReference type="EMBL" id="AF461716">
    <property type="protein sequence ID" value="AAN76190.1"/>
    <property type="molecule type" value="Genomic_DNA"/>
</dbReference>
<dbReference type="EMBL" id="AF461712">
    <property type="protein sequence ID" value="AAN76190.1"/>
    <property type="status" value="JOINED"/>
    <property type="molecule type" value="Genomic_DNA"/>
</dbReference>
<dbReference type="EMBL" id="AF461713">
    <property type="protein sequence ID" value="AAN76190.1"/>
    <property type="status" value="JOINED"/>
    <property type="molecule type" value="Genomic_DNA"/>
</dbReference>
<dbReference type="EMBL" id="AF461715">
    <property type="protein sequence ID" value="AAN76190.1"/>
    <property type="status" value="JOINED"/>
    <property type="molecule type" value="Genomic_DNA"/>
</dbReference>
<dbReference type="EMBL" id="AF461714">
    <property type="protein sequence ID" value="AAN76190.1"/>
    <property type="status" value="JOINED"/>
    <property type="molecule type" value="Genomic_DNA"/>
</dbReference>
<dbReference type="EMBL" id="AY236962">
    <property type="protein sequence ID" value="AAQ20083.1"/>
    <property type="molecule type" value="mRNA"/>
</dbReference>
<dbReference type="EMBL" id="AK291462">
    <property type="protein sequence ID" value="BAF84151.1"/>
    <property type="molecule type" value="mRNA"/>
</dbReference>
<dbReference type="EMBL" id="AC011247">
    <property type="protein sequence ID" value="AAY24302.1"/>
    <property type="molecule type" value="Genomic_DNA"/>
</dbReference>
<dbReference type="EMBL" id="BC008217">
    <property type="protein sequence ID" value="AAH08217.2"/>
    <property type="molecule type" value="mRNA"/>
</dbReference>
<dbReference type="EMBL" id="BC017480">
    <property type="protein sequence ID" value="AAH17480.1"/>
    <property type="molecule type" value="mRNA"/>
</dbReference>
<dbReference type="EMBL" id="AL512692">
    <property type="protein sequence ID" value="CAH56358.1"/>
    <property type="molecule type" value="mRNA"/>
</dbReference>
<dbReference type="CCDS" id="CCDS1796.2">
    <molecule id="Q8WVV9-1"/>
</dbReference>
<dbReference type="CCDS" id="CCDS46261.1">
    <molecule id="Q8WVV9-4"/>
</dbReference>
<dbReference type="RefSeq" id="NP_001136122.1">
    <molecule id="Q8WVV9-4"/>
    <property type="nucleotide sequence ID" value="NM_001142650.2"/>
</dbReference>
<dbReference type="RefSeq" id="NP_612403.2">
    <molecule id="Q8WVV9-1"/>
    <property type="nucleotide sequence ID" value="NM_138394.3"/>
</dbReference>
<dbReference type="RefSeq" id="XP_047302298.1">
    <molecule id="Q8WVV9-2"/>
    <property type="nucleotide sequence ID" value="XM_047446342.1"/>
</dbReference>
<dbReference type="RefSeq" id="XP_054200550.1">
    <molecule id="Q8WVV9-2"/>
    <property type="nucleotide sequence ID" value="XM_054344575.1"/>
</dbReference>
<dbReference type="PDB" id="7EVS">
    <property type="method" value="X-ray"/>
    <property type="resolution" value="1.60 A"/>
    <property type="chains" value="A/B=166-268"/>
</dbReference>
<dbReference type="PDBsum" id="7EVS"/>
<dbReference type="BMRB" id="Q8WVV9"/>
<dbReference type="SMR" id="Q8WVV9"/>
<dbReference type="BioGRID" id="124985">
    <property type="interactions" value="183"/>
</dbReference>
<dbReference type="FunCoup" id="Q8WVV9">
    <property type="interactions" value="4284"/>
</dbReference>
<dbReference type="IntAct" id="Q8WVV9">
    <property type="interactions" value="96"/>
</dbReference>
<dbReference type="MINT" id="Q8WVV9"/>
<dbReference type="STRING" id="9606.ENSP00000390625"/>
<dbReference type="GlyGen" id="Q8WVV9">
    <property type="glycosylation" value="1 site, 1 O-linked glycan (1 site)"/>
</dbReference>
<dbReference type="iPTMnet" id="Q8WVV9"/>
<dbReference type="PhosphoSitePlus" id="Q8WVV9"/>
<dbReference type="SwissPalm" id="Q8WVV9"/>
<dbReference type="BioMuta" id="HNRNPLL"/>
<dbReference type="DMDM" id="62286941"/>
<dbReference type="jPOST" id="Q8WVV9"/>
<dbReference type="MassIVE" id="Q8WVV9"/>
<dbReference type="PaxDb" id="9606-ENSP00000390625"/>
<dbReference type="PeptideAtlas" id="Q8WVV9"/>
<dbReference type="ProteomicsDB" id="62989"/>
<dbReference type="ProteomicsDB" id="74827">
    <molecule id="Q8WVV9-1"/>
</dbReference>
<dbReference type="ProteomicsDB" id="74828">
    <molecule id="Q8WVV9-2"/>
</dbReference>
<dbReference type="ProteomicsDB" id="74829">
    <molecule id="Q8WVV9-3"/>
</dbReference>
<dbReference type="ProteomicsDB" id="74830">
    <molecule id="Q8WVV9-4"/>
</dbReference>
<dbReference type="Pumba" id="Q8WVV9"/>
<dbReference type="Antibodypedia" id="14627">
    <property type="antibodies" value="197 antibodies from 25 providers"/>
</dbReference>
<dbReference type="DNASU" id="92906"/>
<dbReference type="Ensembl" id="ENST00000409328.5">
    <molecule id="Q8WVV9-5"/>
    <property type="protein sequence ID" value="ENSP00000386575.1"/>
    <property type="gene ID" value="ENSG00000143889.16"/>
</dbReference>
<dbReference type="Ensembl" id="ENST00000409636.5">
    <molecule id="Q8WVV9-4"/>
    <property type="protein sequence ID" value="ENSP00000387088.1"/>
    <property type="gene ID" value="ENSG00000143889.16"/>
</dbReference>
<dbReference type="Ensembl" id="ENST00000410076.5">
    <molecule id="Q8WVV9-3"/>
    <property type="protein sequence ID" value="ENSP00000386695.1"/>
    <property type="gene ID" value="ENSG00000143889.16"/>
</dbReference>
<dbReference type="Ensembl" id="ENST00000449105.8">
    <molecule id="Q8WVV9-1"/>
    <property type="protein sequence ID" value="ENSP00000390625.3"/>
    <property type="gene ID" value="ENSG00000143889.16"/>
</dbReference>
<dbReference type="GeneID" id="92906"/>
<dbReference type="KEGG" id="hsa:92906"/>
<dbReference type="MANE-Select" id="ENST00000449105.8">
    <property type="protein sequence ID" value="ENSP00000390625.3"/>
    <property type="RefSeq nucleotide sequence ID" value="NM_138394.4"/>
    <property type="RefSeq protein sequence ID" value="NP_612403.2"/>
</dbReference>
<dbReference type="UCSC" id="uc021vgb.2">
    <molecule id="Q8WVV9-1"/>
    <property type="organism name" value="human"/>
</dbReference>
<dbReference type="AGR" id="HGNC:25127"/>
<dbReference type="CTD" id="92906"/>
<dbReference type="DisGeNET" id="92906"/>
<dbReference type="GeneCards" id="HNRNPLL"/>
<dbReference type="HGNC" id="HGNC:25127">
    <property type="gene designation" value="HNRNPLL"/>
</dbReference>
<dbReference type="HPA" id="ENSG00000143889">
    <property type="expression patterns" value="Low tissue specificity"/>
</dbReference>
<dbReference type="MIM" id="611208">
    <property type="type" value="gene"/>
</dbReference>
<dbReference type="neXtProt" id="NX_Q8WVV9"/>
<dbReference type="OpenTargets" id="ENSG00000143889"/>
<dbReference type="PharmGKB" id="PA134987080"/>
<dbReference type="VEuPathDB" id="HostDB:ENSG00000143889"/>
<dbReference type="eggNOG" id="KOG1456">
    <property type="taxonomic scope" value="Eukaryota"/>
</dbReference>
<dbReference type="GeneTree" id="ENSGT01030000234642"/>
<dbReference type="HOGENOM" id="CLU_015171_0_0_1"/>
<dbReference type="InParanoid" id="Q8WVV9"/>
<dbReference type="OrthoDB" id="302770at2759"/>
<dbReference type="PAN-GO" id="Q8WVV9">
    <property type="GO annotations" value="3 GO annotations based on evolutionary models"/>
</dbReference>
<dbReference type="PhylomeDB" id="Q8WVV9"/>
<dbReference type="TreeFam" id="TF354318"/>
<dbReference type="PathwayCommons" id="Q8WVV9"/>
<dbReference type="SignaLink" id="Q8WVV9"/>
<dbReference type="BioGRID-ORCS" id="92906">
    <property type="hits" value="11 hits in 1120 CRISPR screens"/>
</dbReference>
<dbReference type="CD-CODE" id="91857CE7">
    <property type="entry name" value="Nucleolus"/>
</dbReference>
<dbReference type="ChiTaRS" id="HNRNPLL">
    <property type="organism name" value="human"/>
</dbReference>
<dbReference type="GenomeRNAi" id="92906"/>
<dbReference type="Pharos" id="Q8WVV9">
    <property type="development level" value="Tbio"/>
</dbReference>
<dbReference type="PRO" id="PR:Q8WVV9"/>
<dbReference type="Proteomes" id="UP000005640">
    <property type="component" value="Chromosome 2"/>
</dbReference>
<dbReference type="RNAct" id="Q8WVV9">
    <property type="molecule type" value="protein"/>
</dbReference>
<dbReference type="Bgee" id="ENSG00000143889">
    <property type="expression patterns" value="Expressed in ventricular zone and 189 other cell types or tissues"/>
</dbReference>
<dbReference type="ExpressionAtlas" id="Q8WVV9">
    <property type="expression patterns" value="baseline and differential"/>
</dbReference>
<dbReference type="GO" id="GO:0016020">
    <property type="term" value="C:membrane"/>
    <property type="evidence" value="ECO:0007005"/>
    <property type="project" value="UniProtKB"/>
</dbReference>
<dbReference type="GO" id="GO:0005634">
    <property type="term" value="C:nucleus"/>
    <property type="evidence" value="ECO:0000318"/>
    <property type="project" value="GO_Central"/>
</dbReference>
<dbReference type="GO" id="GO:1990904">
    <property type="term" value="C:ribonucleoprotein complex"/>
    <property type="evidence" value="ECO:0007669"/>
    <property type="project" value="UniProtKB-KW"/>
</dbReference>
<dbReference type="GO" id="GO:0045202">
    <property type="term" value="C:synapse"/>
    <property type="evidence" value="ECO:0007669"/>
    <property type="project" value="Ensembl"/>
</dbReference>
<dbReference type="GO" id="GO:0003729">
    <property type="term" value="F:mRNA binding"/>
    <property type="evidence" value="ECO:0000314"/>
    <property type="project" value="UniProtKB"/>
</dbReference>
<dbReference type="GO" id="GO:0003723">
    <property type="term" value="F:RNA binding"/>
    <property type="evidence" value="ECO:0007005"/>
    <property type="project" value="UniProtKB"/>
</dbReference>
<dbReference type="GO" id="GO:0006397">
    <property type="term" value="P:mRNA processing"/>
    <property type="evidence" value="ECO:0007669"/>
    <property type="project" value="InterPro"/>
</dbReference>
<dbReference type="GO" id="GO:0033120">
    <property type="term" value="P:positive regulation of RNA splicing"/>
    <property type="evidence" value="ECO:0000314"/>
    <property type="project" value="UniProtKB"/>
</dbReference>
<dbReference type="GO" id="GO:0043484">
    <property type="term" value="P:regulation of RNA splicing"/>
    <property type="evidence" value="ECO:0000318"/>
    <property type="project" value="GO_Central"/>
</dbReference>
<dbReference type="CDD" id="cd12781">
    <property type="entry name" value="RRM1_hnRPLL"/>
    <property type="match status" value="1"/>
</dbReference>
<dbReference type="CDD" id="cd12786">
    <property type="entry name" value="RRM2_hnRPLL"/>
    <property type="match status" value="1"/>
</dbReference>
<dbReference type="CDD" id="cd12700">
    <property type="entry name" value="RRM3_hnRPLL"/>
    <property type="match status" value="1"/>
</dbReference>
<dbReference type="CDD" id="cd12705">
    <property type="entry name" value="RRM4_hnRPLL"/>
    <property type="match status" value="1"/>
</dbReference>
<dbReference type="FunFam" id="3.30.70.330:FF:000072">
    <property type="entry name" value="heterogeneous nuclear ribonucleoprotein L isoform X1"/>
    <property type="match status" value="1"/>
</dbReference>
<dbReference type="FunFam" id="3.30.70.330:FF:000052">
    <property type="entry name" value="Heterogeneous nuclear ribonucleoprotein L like"/>
    <property type="match status" value="1"/>
</dbReference>
<dbReference type="FunFam" id="3.30.70.330:FF:000073">
    <property type="entry name" value="Heterogeneous nuclear ribonucleoprotein L like"/>
    <property type="match status" value="1"/>
</dbReference>
<dbReference type="FunFam" id="3.30.70.330:FF:000104">
    <property type="entry name" value="Heterogeneous nuclear ribonucleoprotein L like"/>
    <property type="match status" value="1"/>
</dbReference>
<dbReference type="Gene3D" id="3.30.70.330">
    <property type="match status" value="4"/>
</dbReference>
<dbReference type="InterPro" id="IPR006536">
    <property type="entry name" value="HnRNP-L/PTB"/>
</dbReference>
<dbReference type="InterPro" id="IPR034985">
    <property type="entry name" value="hnRPLL_RRM1"/>
</dbReference>
<dbReference type="InterPro" id="IPR034986">
    <property type="entry name" value="hnRPLL_RRM2"/>
</dbReference>
<dbReference type="InterPro" id="IPR034983">
    <property type="entry name" value="hnRPLL_RRM3"/>
</dbReference>
<dbReference type="InterPro" id="IPR034987">
    <property type="entry name" value="hnRPLL_RRM4"/>
</dbReference>
<dbReference type="InterPro" id="IPR012677">
    <property type="entry name" value="Nucleotide-bd_a/b_plait_sf"/>
</dbReference>
<dbReference type="InterPro" id="IPR021790">
    <property type="entry name" value="PTBP1-like_RRM2"/>
</dbReference>
<dbReference type="InterPro" id="IPR035979">
    <property type="entry name" value="RBD_domain_sf"/>
</dbReference>
<dbReference type="InterPro" id="IPR000504">
    <property type="entry name" value="RRM_dom"/>
</dbReference>
<dbReference type="NCBIfam" id="TIGR01649">
    <property type="entry name" value="hnRNP-L_PTB"/>
    <property type="match status" value="1"/>
</dbReference>
<dbReference type="PANTHER" id="PTHR15592">
    <property type="entry name" value="MATRIN 3/NUCLEAR PROTEIN 220-RELATED"/>
    <property type="match status" value="1"/>
</dbReference>
<dbReference type="Pfam" id="PF00076">
    <property type="entry name" value="RRM_1"/>
    <property type="match status" value="1"/>
</dbReference>
<dbReference type="Pfam" id="PF13893">
    <property type="entry name" value="RRM_5"/>
    <property type="match status" value="1"/>
</dbReference>
<dbReference type="Pfam" id="PF11835">
    <property type="entry name" value="RRM_8"/>
    <property type="match status" value="1"/>
</dbReference>
<dbReference type="SMART" id="SM00360">
    <property type="entry name" value="RRM"/>
    <property type="match status" value="3"/>
</dbReference>
<dbReference type="SUPFAM" id="SSF54928">
    <property type="entry name" value="RNA-binding domain, RBD"/>
    <property type="match status" value="3"/>
</dbReference>
<dbReference type="PROSITE" id="PS50102">
    <property type="entry name" value="RRM"/>
    <property type="match status" value="2"/>
</dbReference>
<evidence type="ECO:0000255" key="1">
    <source>
        <dbReference type="PROSITE-ProRule" id="PRU00176"/>
    </source>
</evidence>
<evidence type="ECO:0000256" key="2">
    <source>
        <dbReference type="SAM" id="MobiDB-lite"/>
    </source>
</evidence>
<evidence type="ECO:0000269" key="3">
    <source>
    </source>
</evidence>
<evidence type="ECO:0000269" key="4">
    <source>
    </source>
</evidence>
<evidence type="ECO:0000303" key="5">
    <source>
    </source>
</evidence>
<evidence type="ECO:0000303" key="6">
    <source>
    </source>
</evidence>
<evidence type="ECO:0000303" key="7">
    <source>
    </source>
</evidence>
<evidence type="ECO:0000303" key="8">
    <source ref="3"/>
</evidence>
<evidence type="ECO:0000305" key="9"/>
<evidence type="ECO:0007744" key="10">
    <source>
    </source>
</evidence>
<evidence type="ECO:0007744" key="11">
    <source>
    </source>
</evidence>
<evidence type="ECO:0007744" key="12">
    <source>
    </source>
</evidence>
<evidence type="ECO:0007829" key="13">
    <source>
        <dbReference type="PDB" id="7EVS"/>
    </source>
</evidence>
<reference key="1">
    <citation type="journal article" date="2004" name="Gene">
        <title>Alternatively spliced isoforms of a novel stromal RNA regulating factor.</title>
        <authorList>
            <person name="Shur I."/>
            <person name="Ben-Avraham D."/>
            <person name="Benayahu D."/>
        </authorList>
    </citation>
    <scope>NUCLEOTIDE SEQUENCE [MRNA] (ISOFORM 4)</scope>
    <scope>ALTERNATIVE SPLICING</scope>
    <scope>TISSUE SPECIFICITY</scope>
</reference>
<reference key="2">
    <citation type="submission" date="2001-12" db="EMBL/GenBank/DDBJ databases">
        <title>Physical/genetic map of the 2p22-2p21 region on chromosome 2.</title>
        <authorList>
            <person name="Gorry M.C."/>
            <person name="Zhang Y."/>
            <person name="Marks J.J."/>
            <person name="Suppes B."/>
            <person name="Hart P.S."/>
            <person name="Cortelli J.R."/>
            <person name="Pallos D."/>
            <person name="Hart T.C."/>
        </authorList>
    </citation>
    <scope>NUCLEOTIDE SEQUENCE [GENOMIC DNA]</scope>
</reference>
<reference key="3">
    <citation type="submission" date="2003-02" db="EMBL/GenBank/DDBJ databases">
        <title>Stromal RNA regulating factor (SRRF).</title>
        <authorList>
            <person name="Benayahu D."/>
            <person name="Ben-Avraham D."/>
            <person name="Shur I."/>
        </authorList>
    </citation>
    <scope>NUCLEOTIDE SEQUENCE [MRNA] (ISOFORM 2)</scope>
</reference>
<reference key="4">
    <citation type="journal article" date="2004" name="Nat. Genet.">
        <title>Complete sequencing and characterization of 21,243 full-length human cDNAs.</title>
        <authorList>
            <person name="Ota T."/>
            <person name="Suzuki Y."/>
            <person name="Nishikawa T."/>
            <person name="Otsuki T."/>
            <person name="Sugiyama T."/>
            <person name="Irie R."/>
            <person name="Wakamatsu A."/>
            <person name="Hayashi K."/>
            <person name="Sato H."/>
            <person name="Nagai K."/>
            <person name="Kimura K."/>
            <person name="Makita H."/>
            <person name="Sekine M."/>
            <person name="Obayashi M."/>
            <person name="Nishi T."/>
            <person name="Shibahara T."/>
            <person name="Tanaka T."/>
            <person name="Ishii S."/>
            <person name="Yamamoto J."/>
            <person name="Saito K."/>
            <person name="Kawai Y."/>
            <person name="Isono Y."/>
            <person name="Nakamura Y."/>
            <person name="Nagahari K."/>
            <person name="Murakami K."/>
            <person name="Yasuda T."/>
            <person name="Iwayanagi T."/>
            <person name="Wagatsuma M."/>
            <person name="Shiratori A."/>
            <person name="Sudo H."/>
            <person name="Hosoiri T."/>
            <person name="Kaku Y."/>
            <person name="Kodaira H."/>
            <person name="Kondo H."/>
            <person name="Sugawara M."/>
            <person name="Takahashi M."/>
            <person name="Kanda K."/>
            <person name="Yokoi T."/>
            <person name="Furuya T."/>
            <person name="Kikkawa E."/>
            <person name="Omura Y."/>
            <person name="Abe K."/>
            <person name="Kamihara K."/>
            <person name="Katsuta N."/>
            <person name="Sato K."/>
            <person name="Tanikawa M."/>
            <person name="Yamazaki M."/>
            <person name="Ninomiya K."/>
            <person name="Ishibashi T."/>
            <person name="Yamashita H."/>
            <person name="Murakawa K."/>
            <person name="Fujimori K."/>
            <person name="Tanai H."/>
            <person name="Kimata M."/>
            <person name="Watanabe M."/>
            <person name="Hiraoka S."/>
            <person name="Chiba Y."/>
            <person name="Ishida S."/>
            <person name="Ono Y."/>
            <person name="Takiguchi S."/>
            <person name="Watanabe S."/>
            <person name="Yosida M."/>
            <person name="Hotuta T."/>
            <person name="Kusano J."/>
            <person name="Kanehori K."/>
            <person name="Takahashi-Fujii A."/>
            <person name="Hara H."/>
            <person name="Tanase T.-O."/>
            <person name="Nomura Y."/>
            <person name="Togiya S."/>
            <person name="Komai F."/>
            <person name="Hara R."/>
            <person name="Takeuchi K."/>
            <person name="Arita M."/>
            <person name="Imose N."/>
            <person name="Musashino K."/>
            <person name="Yuuki H."/>
            <person name="Oshima A."/>
            <person name="Sasaki N."/>
            <person name="Aotsuka S."/>
            <person name="Yoshikawa Y."/>
            <person name="Matsunawa H."/>
            <person name="Ichihara T."/>
            <person name="Shiohata N."/>
            <person name="Sano S."/>
            <person name="Moriya S."/>
            <person name="Momiyama H."/>
            <person name="Satoh N."/>
            <person name="Takami S."/>
            <person name="Terashima Y."/>
            <person name="Suzuki O."/>
            <person name="Nakagawa S."/>
            <person name="Senoh A."/>
            <person name="Mizoguchi H."/>
            <person name="Goto Y."/>
            <person name="Shimizu F."/>
            <person name="Wakebe H."/>
            <person name="Hishigaki H."/>
            <person name="Watanabe T."/>
            <person name="Sugiyama A."/>
            <person name="Takemoto M."/>
            <person name="Kawakami B."/>
            <person name="Yamazaki M."/>
            <person name="Watanabe K."/>
            <person name="Kumagai A."/>
            <person name="Itakura S."/>
            <person name="Fukuzumi Y."/>
            <person name="Fujimori Y."/>
            <person name="Komiyama M."/>
            <person name="Tashiro H."/>
            <person name="Tanigami A."/>
            <person name="Fujiwara T."/>
            <person name="Ono T."/>
            <person name="Yamada K."/>
            <person name="Fujii Y."/>
            <person name="Ozaki K."/>
            <person name="Hirao M."/>
            <person name="Ohmori Y."/>
            <person name="Kawabata A."/>
            <person name="Hikiji T."/>
            <person name="Kobatake N."/>
            <person name="Inagaki H."/>
            <person name="Ikema Y."/>
            <person name="Okamoto S."/>
            <person name="Okitani R."/>
            <person name="Kawakami T."/>
            <person name="Noguchi S."/>
            <person name="Itoh T."/>
            <person name="Shigeta K."/>
            <person name="Senba T."/>
            <person name="Matsumura K."/>
            <person name="Nakajima Y."/>
            <person name="Mizuno T."/>
            <person name="Morinaga M."/>
            <person name="Sasaki M."/>
            <person name="Togashi T."/>
            <person name="Oyama M."/>
            <person name="Hata H."/>
            <person name="Watanabe M."/>
            <person name="Komatsu T."/>
            <person name="Mizushima-Sugano J."/>
            <person name="Satoh T."/>
            <person name="Shirai Y."/>
            <person name="Takahashi Y."/>
            <person name="Nakagawa K."/>
            <person name="Okumura K."/>
            <person name="Nagase T."/>
            <person name="Nomura N."/>
            <person name="Kikuchi H."/>
            <person name="Masuho Y."/>
            <person name="Yamashita R."/>
            <person name="Nakai K."/>
            <person name="Yada T."/>
            <person name="Nakamura Y."/>
            <person name="Ohara O."/>
            <person name="Isogai T."/>
            <person name="Sugano S."/>
        </authorList>
    </citation>
    <scope>NUCLEOTIDE SEQUENCE [LARGE SCALE MRNA]</scope>
    <source>
        <tissue>Brain</tissue>
    </source>
</reference>
<reference key="5">
    <citation type="journal article" date="2005" name="Nature">
        <title>Generation and annotation of the DNA sequences of human chromosomes 2 and 4.</title>
        <authorList>
            <person name="Hillier L.W."/>
            <person name="Graves T.A."/>
            <person name="Fulton R.S."/>
            <person name="Fulton L.A."/>
            <person name="Pepin K.H."/>
            <person name="Minx P."/>
            <person name="Wagner-McPherson C."/>
            <person name="Layman D."/>
            <person name="Wylie K."/>
            <person name="Sekhon M."/>
            <person name="Becker M.C."/>
            <person name="Fewell G.A."/>
            <person name="Delehaunty K.D."/>
            <person name="Miner T.L."/>
            <person name="Nash W.E."/>
            <person name="Kremitzki C."/>
            <person name="Oddy L."/>
            <person name="Du H."/>
            <person name="Sun H."/>
            <person name="Bradshaw-Cordum H."/>
            <person name="Ali J."/>
            <person name="Carter J."/>
            <person name="Cordes M."/>
            <person name="Harris A."/>
            <person name="Isak A."/>
            <person name="van Brunt A."/>
            <person name="Nguyen C."/>
            <person name="Du F."/>
            <person name="Courtney L."/>
            <person name="Kalicki J."/>
            <person name="Ozersky P."/>
            <person name="Abbott S."/>
            <person name="Armstrong J."/>
            <person name="Belter E.A."/>
            <person name="Caruso L."/>
            <person name="Cedroni M."/>
            <person name="Cotton M."/>
            <person name="Davidson T."/>
            <person name="Desai A."/>
            <person name="Elliott G."/>
            <person name="Erb T."/>
            <person name="Fronick C."/>
            <person name="Gaige T."/>
            <person name="Haakenson W."/>
            <person name="Haglund K."/>
            <person name="Holmes A."/>
            <person name="Harkins R."/>
            <person name="Kim K."/>
            <person name="Kruchowski S.S."/>
            <person name="Strong C.M."/>
            <person name="Grewal N."/>
            <person name="Goyea E."/>
            <person name="Hou S."/>
            <person name="Levy A."/>
            <person name="Martinka S."/>
            <person name="Mead K."/>
            <person name="McLellan M.D."/>
            <person name="Meyer R."/>
            <person name="Randall-Maher J."/>
            <person name="Tomlinson C."/>
            <person name="Dauphin-Kohlberg S."/>
            <person name="Kozlowicz-Reilly A."/>
            <person name="Shah N."/>
            <person name="Swearengen-Shahid S."/>
            <person name="Snider J."/>
            <person name="Strong J.T."/>
            <person name="Thompson J."/>
            <person name="Yoakum M."/>
            <person name="Leonard S."/>
            <person name="Pearman C."/>
            <person name="Trani L."/>
            <person name="Radionenko M."/>
            <person name="Waligorski J.E."/>
            <person name="Wang C."/>
            <person name="Rock S.M."/>
            <person name="Tin-Wollam A.-M."/>
            <person name="Maupin R."/>
            <person name="Latreille P."/>
            <person name="Wendl M.C."/>
            <person name="Yang S.-P."/>
            <person name="Pohl C."/>
            <person name="Wallis J.W."/>
            <person name="Spieth J."/>
            <person name="Bieri T.A."/>
            <person name="Berkowicz N."/>
            <person name="Nelson J.O."/>
            <person name="Osborne J."/>
            <person name="Ding L."/>
            <person name="Meyer R."/>
            <person name="Sabo A."/>
            <person name="Shotland Y."/>
            <person name="Sinha P."/>
            <person name="Wohldmann P.E."/>
            <person name="Cook L.L."/>
            <person name="Hickenbotham M.T."/>
            <person name="Eldred J."/>
            <person name="Williams D."/>
            <person name="Jones T.A."/>
            <person name="She X."/>
            <person name="Ciccarelli F.D."/>
            <person name="Izaurralde E."/>
            <person name="Taylor J."/>
            <person name="Schmutz J."/>
            <person name="Myers R.M."/>
            <person name="Cox D.R."/>
            <person name="Huang X."/>
            <person name="McPherson J.D."/>
            <person name="Mardis E.R."/>
            <person name="Clifton S.W."/>
            <person name="Warren W.C."/>
            <person name="Chinwalla A.T."/>
            <person name="Eddy S.R."/>
            <person name="Marra M.A."/>
            <person name="Ovcharenko I."/>
            <person name="Furey T.S."/>
            <person name="Miller W."/>
            <person name="Eichler E.E."/>
            <person name="Bork P."/>
            <person name="Suyama M."/>
            <person name="Torrents D."/>
            <person name="Waterston R.H."/>
            <person name="Wilson R.K."/>
        </authorList>
    </citation>
    <scope>NUCLEOTIDE SEQUENCE [LARGE SCALE GENOMIC DNA]</scope>
</reference>
<reference key="6">
    <citation type="journal article" date="2004" name="Genome Res.">
        <title>The status, quality, and expansion of the NIH full-length cDNA project: the Mammalian Gene Collection (MGC).</title>
        <authorList>
            <consortium name="The MGC Project Team"/>
        </authorList>
    </citation>
    <scope>NUCLEOTIDE SEQUENCE [LARGE SCALE MRNA] (ISOFORMS 1 AND 3)</scope>
    <source>
        <tissue>Brain</tissue>
        <tissue>Placenta</tissue>
    </source>
</reference>
<reference key="7">
    <citation type="journal article" date="2007" name="BMC Genomics">
        <title>The full-ORF clone resource of the German cDNA consortium.</title>
        <authorList>
            <person name="Bechtel S."/>
            <person name="Rosenfelder H."/>
            <person name="Duda A."/>
            <person name="Schmidt C.P."/>
            <person name="Ernst U."/>
            <person name="Wellenreuther R."/>
            <person name="Mehrle A."/>
            <person name="Schuster C."/>
            <person name="Bahr A."/>
            <person name="Bloecker H."/>
            <person name="Heubner D."/>
            <person name="Hoerlein A."/>
            <person name="Michel G."/>
            <person name="Wedler H."/>
            <person name="Koehrer K."/>
            <person name="Ottenwaelder B."/>
            <person name="Poustka A."/>
            <person name="Wiemann S."/>
            <person name="Schupp I."/>
        </authorList>
    </citation>
    <scope>NUCLEOTIDE SEQUENCE [LARGE SCALE MRNA] OF 67-542 (ISOFORM 2)</scope>
    <source>
        <tissue>Lymph node</tissue>
    </source>
</reference>
<reference key="8">
    <citation type="journal article" date="2008" name="Proc. Natl. Acad. Sci. U.S.A.">
        <title>A quantitative atlas of mitotic phosphorylation.</title>
        <authorList>
            <person name="Dephoure N."/>
            <person name="Zhou C."/>
            <person name="Villen J."/>
            <person name="Beausoleil S.A."/>
            <person name="Bakalarski C.E."/>
            <person name="Elledge S.J."/>
            <person name="Gygi S.P."/>
        </authorList>
    </citation>
    <scope>IDENTIFICATION BY MASS SPECTROMETRY [LARGE SCALE ANALYSIS]</scope>
    <source>
        <tissue>Cervix carcinoma</tissue>
    </source>
</reference>
<reference key="9">
    <citation type="journal article" date="2008" name="Science">
        <title>Regulation of CD45 alternative splicing by heterogeneous ribonucleoprotein, hnRNPLL.</title>
        <authorList>
            <person name="Oberdoerffer S."/>
            <person name="Moita L.F."/>
            <person name="Neems D."/>
            <person name="Freitas R.P."/>
            <person name="Hacohen N."/>
            <person name="Rao A."/>
        </authorList>
    </citation>
    <scope>FUNCTION</scope>
    <scope>INDUCTION</scope>
    <scope>INTERACTION WITH HNRNPL</scope>
</reference>
<reference key="10">
    <citation type="journal article" date="2010" name="Sci. Signal.">
        <title>Quantitative phosphoproteomics reveals widespread full phosphorylation site occupancy during mitosis.</title>
        <authorList>
            <person name="Olsen J.V."/>
            <person name="Vermeulen M."/>
            <person name="Santamaria A."/>
            <person name="Kumar C."/>
            <person name="Miller M.L."/>
            <person name="Jensen L.J."/>
            <person name="Gnad F."/>
            <person name="Cox J."/>
            <person name="Jensen T.S."/>
            <person name="Nigg E.A."/>
            <person name="Brunak S."/>
            <person name="Mann M."/>
        </authorList>
    </citation>
    <scope>PHOSPHORYLATION [LARGE SCALE ANALYSIS] AT SER-68</scope>
    <scope>IDENTIFICATION BY MASS SPECTROMETRY [LARGE SCALE ANALYSIS]</scope>
    <source>
        <tissue>Cervix carcinoma</tissue>
    </source>
</reference>
<reference key="11">
    <citation type="journal article" date="2011" name="BMC Syst. Biol.">
        <title>Initial characterization of the human central proteome.</title>
        <authorList>
            <person name="Burkard T.R."/>
            <person name="Planyavsky M."/>
            <person name="Kaupe I."/>
            <person name="Breitwieser F.P."/>
            <person name="Buerckstuemmer T."/>
            <person name="Bennett K.L."/>
            <person name="Superti-Furga G."/>
            <person name="Colinge J."/>
        </authorList>
    </citation>
    <scope>IDENTIFICATION BY MASS SPECTROMETRY [LARGE SCALE ANALYSIS]</scope>
</reference>
<reference key="12">
    <citation type="journal article" date="2013" name="J. Proteome Res.">
        <title>Toward a comprehensive characterization of a human cancer cell phosphoproteome.</title>
        <authorList>
            <person name="Zhou H."/>
            <person name="Di Palma S."/>
            <person name="Preisinger C."/>
            <person name="Peng M."/>
            <person name="Polat A.N."/>
            <person name="Heck A.J."/>
            <person name="Mohammed S."/>
        </authorList>
    </citation>
    <scope>PHOSPHORYLATION [LARGE SCALE ANALYSIS] AT SER-35; THR-46; SER-59 AND SER-75</scope>
    <scope>IDENTIFICATION BY MASS SPECTROMETRY [LARGE SCALE ANALYSIS]</scope>
    <source>
        <tissue>Cervix carcinoma</tissue>
        <tissue>Erythroleukemia</tissue>
    </source>
</reference>
<reference key="13">
    <citation type="journal article" date="2017" name="Nat. Struct. Mol. Biol.">
        <title>Site-specific mapping of the human SUMO proteome reveals co-modification with phosphorylation.</title>
        <authorList>
            <person name="Hendriks I.A."/>
            <person name="Lyon D."/>
            <person name="Young C."/>
            <person name="Jensen L.J."/>
            <person name="Vertegaal A.C."/>
            <person name="Nielsen M.L."/>
        </authorList>
    </citation>
    <scope>SUMOYLATION [LARGE SCALE ANALYSIS] AT LYS-26 AND LYS-491</scope>
    <scope>IDENTIFICATION BY MASS SPECTROMETRY [LARGE SCALE ANALYSIS]</scope>
</reference>
<keyword id="KW-0002">3D-structure</keyword>
<keyword id="KW-0025">Alternative splicing</keyword>
<keyword id="KW-1017">Isopeptide bond</keyword>
<keyword id="KW-0597">Phosphoprotein</keyword>
<keyword id="KW-1267">Proteomics identification</keyword>
<keyword id="KW-1185">Reference proteome</keyword>
<keyword id="KW-0677">Repeat</keyword>
<keyword id="KW-0687">Ribonucleoprotein</keyword>
<keyword id="KW-0694">RNA-binding</keyword>
<keyword id="KW-0832">Ubl conjugation</keyword>
<gene>
    <name type="primary">HNRNPLL</name>
    <name type="synonym">HNRPLL</name>
    <name type="synonym">SRRF</name>
    <name type="ORF">BLOCK24</name>
</gene>
<name>HNRLL_HUMAN</name>
<accession>Q8WVV9</accession>
<accession>Q53T80</accession>
<accession>Q5JB51</accession>
<accession>Q5JB52</accession>
<accession>Q659B9</accession>
<accession>Q8IVH5</accession>
<accession>Q8IVH6</accession>
<accession>Q96HR5</accession>